<accession>Q9DF67</accession>
<organism>
    <name type="scientific">Protobothrops jerdonii</name>
    <name type="common">Jerdon's pitviper</name>
    <name type="synonym">Trimeresurus jerdonii</name>
    <dbReference type="NCBI Taxonomy" id="242841"/>
    <lineage>
        <taxon>Eukaryota</taxon>
        <taxon>Metazoa</taxon>
        <taxon>Chordata</taxon>
        <taxon>Craniata</taxon>
        <taxon>Vertebrata</taxon>
        <taxon>Euteleostomi</taxon>
        <taxon>Lepidosauria</taxon>
        <taxon>Squamata</taxon>
        <taxon>Bifurcata</taxon>
        <taxon>Unidentata</taxon>
        <taxon>Episquamata</taxon>
        <taxon>Toxicofera</taxon>
        <taxon>Serpentes</taxon>
        <taxon>Colubroidea</taxon>
        <taxon>Viperidae</taxon>
        <taxon>Crotalinae</taxon>
        <taxon>Protobothrops</taxon>
    </lineage>
</organism>
<reference key="1">
    <citation type="journal article" date="2005" name="Toxicon">
        <title>Molecular characterization of a weak fibrinogen-clotting enzyme from Trimeresurus jerdonii venom.</title>
        <authorList>
            <person name="Jin Y."/>
            <person name="Lu Q.M."/>
            <person name="Chen R.Q."/>
            <person name="Wu J.B."/>
            <person name="Xiong Y.L."/>
        </authorList>
    </citation>
    <scope>NUCLEOTIDE SEQUENCE [MRNA]</scope>
    <scope>PROTEIN SEQUENCE OF 25-60</scope>
    <scope>FUNCTION</scope>
    <scope>CATALYTIC ACTIVITY</scope>
    <scope>SUBSTRATE SPECIFICITY</scope>
    <scope>ACTIVITY REGULATION</scope>
    <scope>SUBCELLULAR LOCATION</scope>
    <source>
        <tissue>Venom</tissue>
        <tissue>Venom gland</tissue>
    </source>
</reference>
<evidence type="ECO:0000250" key="1"/>
<evidence type="ECO:0000255" key="2"/>
<evidence type="ECO:0000255" key="3">
    <source>
        <dbReference type="PROSITE-ProRule" id="PRU00274"/>
    </source>
</evidence>
<evidence type="ECO:0000269" key="4">
    <source>
    </source>
</evidence>
<evidence type="ECO:0000305" key="5">
    <source>
    </source>
</evidence>
<feature type="signal peptide" evidence="1">
    <location>
        <begin position="1"/>
        <end position="18"/>
    </location>
</feature>
<feature type="propeptide" id="PRO_0000028403" evidence="4">
    <location>
        <begin position="19"/>
        <end position="24"/>
    </location>
</feature>
<feature type="chain" id="PRO_0000028404" description="Snake venom serine protease 2">
    <location>
        <begin position="25"/>
        <end position="258"/>
    </location>
</feature>
<feature type="domain" description="Peptidase S1" evidence="3">
    <location>
        <begin position="25"/>
        <end position="249"/>
    </location>
</feature>
<feature type="active site" description="Charge relay system" evidence="1">
    <location>
        <position position="65"/>
    </location>
</feature>
<feature type="active site" description="Charge relay system" evidence="1">
    <location>
        <position position="110"/>
    </location>
</feature>
<feature type="active site" description="Charge relay system" evidence="1">
    <location>
        <position position="204"/>
    </location>
</feature>
<feature type="glycosylation site" description="N-linked (GlcNAc...) asparagine" evidence="2">
    <location>
        <position position="44"/>
    </location>
</feature>
<feature type="glycosylation site" description="N-linked (GlcNAc...) asparagine" evidence="2">
    <location>
        <position position="122"/>
    </location>
</feature>
<feature type="glycosylation site" description="N-linked (GlcNAc...) asparagine" evidence="2">
    <location>
        <position position="185"/>
    </location>
</feature>
<feature type="disulfide bond" evidence="3">
    <location>
        <begin position="31"/>
        <end position="163"/>
    </location>
</feature>
<feature type="disulfide bond" evidence="3">
    <location>
        <begin position="50"/>
        <end position="66"/>
    </location>
</feature>
<feature type="disulfide bond" evidence="3">
    <location>
        <begin position="98"/>
        <end position="256"/>
    </location>
</feature>
<feature type="disulfide bond" evidence="3">
    <location>
        <begin position="142"/>
        <end position="210"/>
    </location>
</feature>
<feature type="disulfide bond" evidence="3">
    <location>
        <begin position="174"/>
        <end position="189"/>
    </location>
</feature>
<feature type="disulfide bond" evidence="3">
    <location>
        <begin position="200"/>
        <end position="225"/>
    </location>
</feature>
<sequence>MVLIRVLANLLILQLSYAQKSSELVFGGRPCNINEHRSLVVLFNSSGFLCGGTLINQDWVVTAAHCDSENFQLLFGVHSKKILNEDEQTRDPKEKFFCPNRKNDDEVDKDIMLIKLDSSVSNSTHIAPLSLPSSPPSVGSVCRIMGWGKTIPTKEIYPDVPHCANINILDHAVCRAAYSWRTVANTTLCAGILQGGKDTCHADSGGPLICNGQVQGIVSWGGHPCGQPREPGVYTKVLDYNDWVQSIIAGNTEATCPP</sequence>
<comment type="function">
    <text evidence="1 4">Snake venom serine protease that may act in the hemostasis system of the prey (By similarity). Has weak fibrinogen clotting activity. Possesses amidolysis activity towards S-2251 (substrate for plasmin) but has no hydrolytic activity with S-2302 (plasma kallikrein substrate) or S-2238 (thrombin substrate).</text>
</comment>
<comment type="activity regulation">
    <text evidence="4">Inhibited by PMSF at 2 mM concentration but not by EDTA.</text>
</comment>
<comment type="subunit">
    <text evidence="1">Monomer.</text>
</comment>
<comment type="subcellular location">
    <subcellularLocation>
        <location evidence="4">Secreted</location>
    </subcellularLocation>
</comment>
<comment type="tissue specificity">
    <text evidence="5">Expressed by the venom gland.</text>
</comment>
<comment type="miscellaneous">
    <text evidence="4">Negative results: does not activate nor degrade plasminogen or prothrombin (F2). Does not activate factor XIII.</text>
</comment>
<comment type="similarity">
    <text evidence="3">Belongs to the peptidase S1 family. Snake venom subfamily.</text>
</comment>
<protein>
    <recommendedName>
        <fullName>Snake venom serine protease 2</fullName>
        <shortName>SP2</shortName>
        <shortName>SVSP</shortName>
        <ecNumber>3.4.21.-</ecNumber>
    </recommendedName>
    <alternativeName>
        <fullName>Jerdonobin-II</fullName>
    </alternativeName>
</protein>
<dbReference type="EC" id="3.4.21.-"/>
<dbReference type="EMBL" id="AF292111">
    <property type="protein sequence ID" value="AAG10789.1"/>
    <property type="molecule type" value="mRNA"/>
</dbReference>
<dbReference type="SMR" id="Q9DF67"/>
<dbReference type="MEROPS" id="S01.186"/>
<dbReference type="GO" id="GO:0005576">
    <property type="term" value="C:extracellular region"/>
    <property type="evidence" value="ECO:0007669"/>
    <property type="project" value="UniProtKB-SubCell"/>
</dbReference>
<dbReference type="GO" id="GO:0030141">
    <property type="term" value="C:secretory granule"/>
    <property type="evidence" value="ECO:0007669"/>
    <property type="project" value="TreeGrafter"/>
</dbReference>
<dbReference type="GO" id="GO:0004252">
    <property type="term" value="F:serine-type endopeptidase activity"/>
    <property type="evidence" value="ECO:0007669"/>
    <property type="project" value="InterPro"/>
</dbReference>
<dbReference type="GO" id="GO:0090729">
    <property type="term" value="F:toxin activity"/>
    <property type="evidence" value="ECO:0007669"/>
    <property type="project" value="UniProtKB-KW"/>
</dbReference>
<dbReference type="GO" id="GO:0006508">
    <property type="term" value="P:proteolysis"/>
    <property type="evidence" value="ECO:0007669"/>
    <property type="project" value="UniProtKB-KW"/>
</dbReference>
<dbReference type="CDD" id="cd00190">
    <property type="entry name" value="Tryp_SPc"/>
    <property type="match status" value="1"/>
</dbReference>
<dbReference type="FunFam" id="2.40.10.10:FF:000158">
    <property type="entry name" value="Thrombin-like enzyme saxthrombin"/>
    <property type="match status" value="1"/>
</dbReference>
<dbReference type="FunFam" id="2.40.10.10:FF:000153">
    <property type="entry name" value="Venom plasminogen activator TSV-PA"/>
    <property type="match status" value="1"/>
</dbReference>
<dbReference type="Gene3D" id="2.40.10.10">
    <property type="entry name" value="Trypsin-like serine proteases"/>
    <property type="match status" value="2"/>
</dbReference>
<dbReference type="InterPro" id="IPR009003">
    <property type="entry name" value="Peptidase_S1_PA"/>
</dbReference>
<dbReference type="InterPro" id="IPR043504">
    <property type="entry name" value="Peptidase_S1_PA_chymotrypsin"/>
</dbReference>
<dbReference type="InterPro" id="IPR001314">
    <property type="entry name" value="Peptidase_S1A"/>
</dbReference>
<dbReference type="InterPro" id="IPR001254">
    <property type="entry name" value="Trypsin_dom"/>
</dbReference>
<dbReference type="InterPro" id="IPR018114">
    <property type="entry name" value="TRYPSIN_HIS"/>
</dbReference>
<dbReference type="PANTHER" id="PTHR24271:SF47">
    <property type="entry name" value="KALLIKREIN-1"/>
    <property type="match status" value="1"/>
</dbReference>
<dbReference type="PANTHER" id="PTHR24271">
    <property type="entry name" value="KALLIKREIN-RELATED"/>
    <property type="match status" value="1"/>
</dbReference>
<dbReference type="Pfam" id="PF00089">
    <property type="entry name" value="Trypsin"/>
    <property type="match status" value="1"/>
</dbReference>
<dbReference type="PRINTS" id="PR00722">
    <property type="entry name" value="CHYMOTRYPSIN"/>
</dbReference>
<dbReference type="SMART" id="SM00020">
    <property type="entry name" value="Tryp_SPc"/>
    <property type="match status" value="1"/>
</dbReference>
<dbReference type="SUPFAM" id="SSF50494">
    <property type="entry name" value="Trypsin-like serine proteases"/>
    <property type="match status" value="1"/>
</dbReference>
<dbReference type="PROSITE" id="PS50240">
    <property type="entry name" value="TRYPSIN_DOM"/>
    <property type="match status" value="1"/>
</dbReference>
<dbReference type="PROSITE" id="PS00134">
    <property type="entry name" value="TRYPSIN_HIS"/>
    <property type="match status" value="1"/>
</dbReference>
<name>VSP2_PROJR</name>
<proteinExistence type="evidence at protein level"/>
<keyword id="KW-0903">Direct protein sequencing</keyword>
<keyword id="KW-1015">Disulfide bond</keyword>
<keyword id="KW-1205">Fibrinolytic toxin</keyword>
<keyword id="KW-0325">Glycoprotein</keyword>
<keyword id="KW-1199">Hemostasis impairing toxin</keyword>
<keyword id="KW-0378">Hydrolase</keyword>
<keyword id="KW-0645">Protease</keyword>
<keyword id="KW-0964">Secreted</keyword>
<keyword id="KW-0720">Serine protease</keyword>
<keyword id="KW-0732">Signal</keyword>
<keyword id="KW-0800">Toxin</keyword>
<keyword id="KW-0865">Zymogen</keyword>